<feature type="chain" id="PRO_0000120542" description="Uncharacterized aminotransferase C27F1.05c">
    <location>
        <begin position="1"/>
        <end position="484"/>
    </location>
</feature>
<feature type="region of interest" description="Disordered" evidence="2">
    <location>
        <begin position="1"/>
        <end position="32"/>
    </location>
</feature>
<feature type="compositionally biased region" description="Low complexity" evidence="2">
    <location>
        <begin position="1"/>
        <end position="14"/>
    </location>
</feature>
<feature type="compositionally biased region" description="Polar residues" evidence="2">
    <location>
        <begin position="15"/>
        <end position="32"/>
    </location>
</feature>
<feature type="modified residue" description="N6-(pyridoxal phosphate)lysine" evidence="1">
    <location>
        <position position="305"/>
    </location>
</feature>
<sequence>MIDSTSTATATSKTVELNTNGSKTDASSENGTASNYPEGLWCFDEAMKMDPETTVKLQLDHLNKLRTVHGHARNFVKADNSRFVDEKGTEHLDLIGGVGVVTVGNNNQYVWDCLQKCFDAKLYMMGAISYRNLAAAFGRNMALLSPGQKLTRTWTATGGAEANEGVIKLIRLATRYKPNKKKFLSTLNSFHGKTTGAVFLGGKEKWQKYQSPAPFDVDYVPYGDAEALQVALSSGMYRSFIVEPIQGEGGVIVPPPGYLAKARELCTKYDTYLVLDEIQTGCGRTGKFWACEYENIIPDCIAFAKGFSGGLIPFAGYIATEELWNAAYNSLETAFLHTATYQENTLGLAAGVATIDYIVQNDLLSRCRKLGGIMFDRLNKLQTKFPHVMKDVRGRGMIVGIEFYPIPESVQEEFGEYYATPIVNDLADTYHVQVYCSLNNPSVFRFLPPLTIPEADLDEGLSAVESAVAKFDAKVKEAVAAKST</sequence>
<keyword id="KW-0032">Aminotransferase</keyword>
<keyword id="KW-0663">Pyridoxal phosphate</keyword>
<keyword id="KW-1185">Reference proteome</keyword>
<keyword id="KW-0808">Transferase</keyword>
<reference key="1">
    <citation type="journal article" date="2002" name="Nature">
        <title>The genome sequence of Schizosaccharomyces pombe.</title>
        <authorList>
            <person name="Wood V."/>
            <person name="Gwilliam R."/>
            <person name="Rajandream M.A."/>
            <person name="Lyne M.H."/>
            <person name="Lyne R."/>
            <person name="Stewart A."/>
            <person name="Sgouros J.G."/>
            <person name="Peat N."/>
            <person name="Hayles J."/>
            <person name="Baker S.G."/>
            <person name="Basham D."/>
            <person name="Bowman S."/>
            <person name="Brooks K."/>
            <person name="Brown D."/>
            <person name="Brown S."/>
            <person name="Chillingworth T."/>
            <person name="Churcher C.M."/>
            <person name="Collins M."/>
            <person name="Connor R."/>
            <person name="Cronin A."/>
            <person name="Davis P."/>
            <person name="Feltwell T."/>
            <person name="Fraser A."/>
            <person name="Gentles S."/>
            <person name="Goble A."/>
            <person name="Hamlin N."/>
            <person name="Harris D.E."/>
            <person name="Hidalgo J."/>
            <person name="Hodgson G."/>
            <person name="Holroyd S."/>
            <person name="Hornsby T."/>
            <person name="Howarth S."/>
            <person name="Huckle E.J."/>
            <person name="Hunt S."/>
            <person name="Jagels K."/>
            <person name="James K.D."/>
            <person name="Jones L."/>
            <person name="Jones M."/>
            <person name="Leather S."/>
            <person name="McDonald S."/>
            <person name="McLean J."/>
            <person name="Mooney P."/>
            <person name="Moule S."/>
            <person name="Mungall K.L."/>
            <person name="Murphy L.D."/>
            <person name="Niblett D."/>
            <person name="Odell C."/>
            <person name="Oliver K."/>
            <person name="O'Neil S."/>
            <person name="Pearson D."/>
            <person name="Quail M.A."/>
            <person name="Rabbinowitsch E."/>
            <person name="Rutherford K.M."/>
            <person name="Rutter S."/>
            <person name="Saunders D."/>
            <person name="Seeger K."/>
            <person name="Sharp S."/>
            <person name="Skelton J."/>
            <person name="Simmonds M.N."/>
            <person name="Squares R."/>
            <person name="Squares S."/>
            <person name="Stevens K."/>
            <person name="Taylor K."/>
            <person name="Taylor R.G."/>
            <person name="Tivey A."/>
            <person name="Walsh S.V."/>
            <person name="Warren T."/>
            <person name="Whitehead S."/>
            <person name="Woodward J.R."/>
            <person name="Volckaert G."/>
            <person name="Aert R."/>
            <person name="Robben J."/>
            <person name="Grymonprez B."/>
            <person name="Weltjens I."/>
            <person name="Vanstreels E."/>
            <person name="Rieger M."/>
            <person name="Schaefer M."/>
            <person name="Mueller-Auer S."/>
            <person name="Gabel C."/>
            <person name="Fuchs M."/>
            <person name="Duesterhoeft A."/>
            <person name="Fritzc C."/>
            <person name="Holzer E."/>
            <person name="Moestl D."/>
            <person name="Hilbert H."/>
            <person name="Borzym K."/>
            <person name="Langer I."/>
            <person name="Beck A."/>
            <person name="Lehrach H."/>
            <person name="Reinhardt R."/>
            <person name="Pohl T.M."/>
            <person name="Eger P."/>
            <person name="Zimmermann W."/>
            <person name="Wedler H."/>
            <person name="Wambutt R."/>
            <person name="Purnelle B."/>
            <person name="Goffeau A."/>
            <person name="Cadieu E."/>
            <person name="Dreano S."/>
            <person name="Gloux S."/>
            <person name="Lelaure V."/>
            <person name="Mottier S."/>
            <person name="Galibert F."/>
            <person name="Aves S.J."/>
            <person name="Xiang Z."/>
            <person name="Hunt C."/>
            <person name="Moore K."/>
            <person name="Hurst S.M."/>
            <person name="Lucas M."/>
            <person name="Rochet M."/>
            <person name="Gaillardin C."/>
            <person name="Tallada V.A."/>
            <person name="Garzon A."/>
            <person name="Thode G."/>
            <person name="Daga R.R."/>
            <person name="Cruzado L."/>
            <person name="Jimenez J."/>
            <person name="Sanchez M."/>
            <person name="del Rey F."/>
            <person name="Benito J."/>
            <person name="Dominguez A."/>
            <person name="Revuelta J.L."/>
            <person name="Moreno S."/>
            <person name="Armstrong J."/>
            <person name="Forsburg S.L."/>
            <person name="Cerutti L."/>
            <person name="Lowe T."/>
            <person name="McCombie W.R."/>
            <person name="Paulsen I."/>
            <person name="Potashkin J."/>
            <person name="Shpakovski G.V."/>
            <person name="Ussery D."/>
            <person name="Barrell B.G."/>
            <person name="Nurse P."/>
        </authorList>
    </citation>
    <scope>NUCLEOTIDE SEQUENCE [LARGE SCALE GENOMIC DNA]</scope>
    <source>
        <strain>972 / ATCC 24843</strain>
    </source>
</reference>
<protein>
    <recommendedName>
        <fullName>Uncharacterized aminotransferase C27F1.05c</fullName>
        <ecNumber>2.6.1.-</ecNumber>
    </recommendedName>
</protein>
<name>YAV5_SCHPO</name>
<dbReference type="EC" id="2.6.1.-"/>
<dbReference type="EMBL" id="CU329670">
    <property type="protein sequence ID" value="CAA93294.1"/>
    <property type="molecule type" value="Genomic_DNA"/>
</dbReference>
<dbReference type="PIR" id="T38463">
    <property type="entry name" value="T38463"/>
</dbReference>
<dbReference type="RefSeq" id="NP_594533.1">
    <property type="nucleotide sequence ID" value="NM_001019962.2"/>
</dbReference>
<dbReference type="SMR" id="Q10174"/>
<dbReference type="BioGRID" id="278456">
    <property type="interactions" value="10"/>
</dbReference>
<dbReference type="FunCoup" id="Q10174">
    <property type="interactions" value="21"/>
</dbReference>
<dbReference type="STRING" id="284812.Q10174"/>
<dbReference type="iPTMnet" id="Q10174"/>
<dbReference type="SwissPalm" id="Q10174"/>
<dbReference type="PaxDb" id="4896-SPAC27F1.05c.1"/>
<dbReference type="EnsemblFungi" id="SPAC27F1.05c.1">
    <property type="protein sequence ID" value="SPAC27F1.05c.1:pep"/>
    <property type="gene ID" value="SPAC27F1.05c"/>
</dbReference>
<dbReference type="KEGG" id="spo:2541971"/>
<dbReference type="PomBase" id="SPAC27F1.05c"/>
<dbReference type="VEuPathDB" id="FungiDB:SPAC27F1.05c"/>
<dbReference type="eggNOG" id="KOG1402">
    <property type="taxonomic scope" value="Eukaryota"/>
</dbReference>
<dbReference type="HOGENOM" id="CLU_016922_10_0_1"/>
<dbReference type="InParanoid" id="Q10174"/>
<dbReference type="OMA" id="NIIPDCI"/>
<dbReference type="PhylomeDB" id="Q10174"/>
<dbReference type="PRO" id="PR:Q10174"/>
<dbReference type="Proteomes" id="UP000002485">
    <property type="component" value="Chromosome I"/>
</dbReference>
<dbReference type="GO" id="GO:0005737">
    <property type="term" value="C:cytoplasm"/>
    <property type="evidence" value="ECO:0007005"/>
    <property type="project" value="PomBase"/>
</dbReference>
<dbReference type="GO" id="GO:0005829">
    <property type="term" value="C:cytosol"/>
    <property type="evidence" value="ECO:0007005"/>
    <property type="project" value="PomBase"/>
</dbReference>
<dbReference type="GO" id="GO:0005759">
    <property type="term" value="C:mitochondrial matrix"/>
    <property type="evidence" value="ECO:0000318"/>
    <property type="project" value="GO_Central"/>
</dbReference>
<dbReference type="GO" id="GO:0042802">
    <property type="term" value="F:identical protein binding"/>
    <property type="evidence" value="ECO:0000318"/>
    <property type="project" value="GO_Central"/>
</dbReference>
<dbReference type="GO" id="GO:0030170">
    <property type="term" value="F:pyridoxal phosphate binding"/>
    <property type="evidence" value="ECO:0000318"/>
    <property type="project" value="GO_Central"/>
</dbReference>
<dbReference type="GO" id="GO:0008483">
    <property type="term" value="F:transaminase activity"/>
    <property type="evidence" value="ECO:0000255"/>
    <property type="project" value="PomBase"/>
</dbReference>
<dbReference type="CDD" id="cd00610">
    <property type="entry name" value="OAT_like"/>
    <property type="match status" value="1"/>
</dbReference>
<dbReference type="FunFam" id="3.40.640.10:FF:000004">
    <property type="entry name" value="Acetylornithine aminotransferase"/>
    <property type="match status" value="1"/>
</dbReference>
<dbReference type="FunFam" id="3.90.1150.10:FF:000391">
    <property type="entry name" value="Uncharacterized aminotransferase C27F1.05c"/>
    <property type="match status" value="1"/>
</dbReference>
<dbReference type="Gene3D" id="3.90.1150.10">
    <property type="entry name" value="Aspartate Aminotransferase, domain 1"/>
    <property type="match status" value="1"/>
</dbReference>
<dbReference type="Gene3D" id="3.40.640.10">
    <property type="entry name" value="Type I PLP-dependent aspartate aminotransferase-like (Major domain)"/>
    <property type="match status" value="1"/>
</dbReference>
<dbReference type="InterPro" id="IPR005814">
    <property type="entry name" value="Aminotrans_3"/>
</dbReference>
<dbReference type="InterPro" id="IPR049704">
    <property type="entry name" value="Aminotrans_3_PPA_site"/>
</dbReference>
<dbReference type="InterPro" id="IPR050103">
    <property type="entry name" value="Class-III_PLP-dep_AT"/>
</dbReference>
<dbReference type="InterPro" id="IPR015424">
    <property type="entry name" value="PyrdxlP-dep_Trfase"/>
</dbReference>
<dbReference type="InterPro" id="IPR015421">
    <property type="entry name" value="PyrdxlP-dep_Trfase_major"/>
</dbReference>
<dbReference type="InterPro" id="IPR015422">
    <property type="entry name" value="PyrdxlP-dep_Trfase_small"/>
</dbReference>
<dbReference type="PANTHER" id="PTHR11986:SF79">
    <property type="entry name" value="ACETYLORNITHINE AMINOTRANSFERASE, MITOCHONDRIAL"/>
    <property type="match status" value="1"/>
</dbReference>
<dbReference type="PANTHER" id="PTHR11986">
    <property type="entry name" value="AMINOTRANSFERASE CLASS III"/>
    <property type="match status" value="1"/>
</dbReference>
<dbReference type="Pfam" id="PF00202">
    <property type="entry name" value="Aminotran_3"/>
    <property type="match status" value="1"/>
</dbReference>
<dbReference type="PIRSF" id="PIRSF000521">
    <property type="entry name" value="Transaminase_4ab_Lys_Orn"/>
    <property type="match status" value="1"/>
</dbReference>
<dbReference type="SUPFAM" id="SSF53383">
    <property type="entry name" value="PLP-dependent transferases"/>
    <property type="match status" value="1"/>
</dbReference>
<dbReference type="PROSITE" id="PS00600">
    <property type="entry name" value="AA_TRANSFER_CLASS_3"/>
    <property type="match status" value="1"/>
</dbReference>
<comment type="cofactor">
    <cofactor evidence="3">
        <name>pyridoxal 5'-phosphate</name>
        <dbReference type="ChEBI" id="CHEBI:597326"/>
    </cofactor>
</comment>
<comment type="similarity">
    <text evidence="3">Belongs to the class-III pyridoxal-phosphate-dependent aminotransferase family.</text>
</comment>
<evidence type="ECO:0000250" key="1"/>
<evidence type="ECO:0000256" key="2">
    <source>
        <dbReference type="SAM" id="MobiDB-lite"/>
    </source>
</evidence>
<evidence type="ECO:0000305" key="3"/>
<proteinExistence type="inferred from homology"/>
<accession>Q10174</accession>
<organism>
    <name type="scientific">Schizosaccharomyces pombe (strain 972 / ATCC 24843)</name>
    <name type="common">Fission yeast</name>
    <dbReference type="NCBI Taxonomy" id="284812"/>
    <lineage>
        <taxon>Eukaryota</taxon>
        <taxon>Fungi</taxon>
        <taxon>Dikarya</taxon>
        <taxon>Ascomycota</taxon>
        <taxon>Taphrinomycotina</taxon>
        <taxon>Schizosaccharomycetes</taxon>
        <taxon>Schizosaccharomycetales</taxon>
        <taxon>Schizosaccharomycetaceae</taxon>
        <taxon>Schizosaccharomyces</taxon>
    </lineage>
</organism>
<gene>
    <name type="ORF">SPAC27F1.05c</name>
</gene>